<name>GPPA_ECO8A</name>
<evidence type="ECO:0000255" key="1">
    <source>
        <dbReference type="HAMAP-Rule" id="MF_01550"/>
    </source>
</evidence>
<sequence length="494" mass="54885">MGSTSSLYAAIDLGSNSFHMLVVREVAGSIQTLTRIKRKVRLAAGLNSENALSNEAMERGWQCLRLFAERLQDIPPSQIRVVATATLRLAVNAGDFIAKAQEILGCPVQVISGEEEARLIYQGVAHTTGGADQRLVVDIGGASTELVTGTGAQTTSLFSLSMGCVTWLERYFADRNLGQENFDAAEKAAREVLRPVADELRYHGWKVCVGASGTVQALQEIMMAQGMDERITLEKLQQLKQRAIHCGRLEELEIDGLTLERALVFPSGLAILIAIFTELNIQCMTLAGGALREGLVYGMLHLAVEQDIRSRTLRNIQRRFMIDIDQAQRVAKVAANFFDQVEKEWHLEAISRDLLISACQLHEIGLSVDFKQAPQHAAYLVRNLDLPGFTPAQKKLLATLLLNQTNPVDLSSLHQQNAVPPRVAEQLCRLLRLAIIFASRRRDDLVPEMTLQANHELLTLTLPQGWLTQHPLGKEIIAQESQWQSYVHWPLEVH</sequence>
<reference key="1">
    <citation type="journal article" date="2009" name="PLoS Genet.">
        <title>Organised genome dynamics in the Escherichia coli species results in highly diverse adaptive paths.</title>
        <authorList>
            <person name="Touchon M."/>
            <person name="Hoede C."/>
            <person name="Tenaillon O."/>
            <person name="Barbe V."/>
            <person name="Baeriswyl S."/>
            <person name="Bidet P."/>
            <person name="Bingen E."/>
            <person name="Bonacorsi S."/>
            <person name="Bouchier C."/>
            <person name="Bouvet O."/>
            <person name="Calteau A."/>
            <person name="Chiapello H."/>
            <person name="Clermont O."/>
            <person name="Cruveiller S."/>
            <person name="Danchin A."/>
            <person name="Diard M."/>
            <person name="Dossat C."/>
            <person name="Karoui M.E."/>
            <person name="Frapy E."/>
            <person name="Garry L."/>
            <person name="Ghigo J.M."/>
            <person name="Gilles A.M."/>
            <person name="Johnson J."/>
            <person name="Le Bouguenec C."/>
            <person name="Lescat M."/>
            <person name="Mangenot S."/>
            <person name="Martinez-Jehanne V."/>
            <person name="Matic I."/>
            <person name="Nassif X."/>
            <person name="Oztas S."/>
            <person name="Petit M.A."/>
            <person name="Pichon C."/>
            <person name="Rouy Z."/>
            <person name="Ruf C.S."/>
            <person name="Schneider D."/>
            <person name="Tourret J."/>
            <person name="Vacherie B."/>
            <person name="Vallenet D."/>
            <person name="Medigue C."/>
            <person name="Rocha E.P.C."/>
            <person name="Denamur E."/>
        </authorList>
    </citation>
    <scope>NUCLEOTIDE SEQUENCE [LARGE SCALE GENOMIC DNA]</scope>
    <source>
        <strain>IAI1</strain>
    </source>
</reference>
<proteinExistence type="inferred from homology"/>
<dbReference type="EC" id="3.6.1.40" evidence="1"/>
<dbReference type="EMBL" id="CU928160">
    <property type="protein sequence ID" value="CAR00750.1"/>
    <property type="molecule type" value="Genomic_DNA"/>
</dbReference>
<dbReference type="RefSeq" id="WP_001299253.1">
    <property type="nucleotide sequence ID" value="NC_011741.1"/>
</dbReference>
<dbReference type="SMR" id="B7M5C6"/>
<dbReference type="GeneID" id="75204769"/>
<dbReference type="KEGG" id="ecr:ECIAI1_3965"/>
<dbReference type="HOGENOM" id="CLU_025908_4_0_6"/>
<dbReference type="UniPathway" id="UPA00908">
    <property type="reaction ID" value="UER00885"/>
</dbReference>
<dbReference type="GO" id="GO:0008894">
    <property type="term" value="F:guanosine-5'-triphosphate,3'-diphosphate diphosphatase activity"/>
    <property type="evidence" value="ECO:0007669"/>
    <property type="project" value="UniProtKB-UniRule"/>
</dbReference>
<dbReference type="GO" id="GO:0015974">
    <property type="term" value="P:guanosine pentaphosphate catabolic process"/>
    <property type="evidence" value="ECO:0007669"/>
    <property type="project" value="InterPro"/>
</dbReference>
<dbReference type="GO" id="GO:0015970">
    <property type="term" value="P:guanosine tetraphosphate biosynthetic process"/>
    <property type="evidence" value="ECO:0007669"/>
    <property type="project" value="UniProtKB-UniRule"/>
</dbReference>
<dbReference type="GO" id="GO:0015949">
    <property type="term" value="P:nucleobase-containing small molecule interconversion"/>
    <property type="evidence" value="ECO:0007669"/>
    <property type="project" value="TreeGrafter"/>
</dbReference>
<dbReference type="CDD" id="cd24117">
    <property type="entry name" value="ASKHA_NBD_EcGppA-like"/>
    <property type="match status" value="1"/>
</dbReference>
<dbReference type="FunFam" id="1.10.3210.10:FF:000004">
    <property type="entry name" value="Guanosine-5'-triphosphate,3'-diphosphate pyrophosphatase"/>
    <property type="match status" value="1"/>
</dbReference>
<dbReference type="FunFam" id="3.30.420.150:FF:000001">
    <property type="entry name" value="Guanosine-5'-triphosphate,3'-diphosphate pyrophosphatase"/>
    <property type="match status" value="1"/>
</dbReference>
<dbReference type="FunFam" id="3.30.420.40:FF:000023">
    <property type="entry name" value="Guanosine-5'-triphosphate,3'-diphosphate pyrophosphatase"/>
    <property type="match status" value="1"/>
</dbReference>
<dbReference type="Gene3D" id="3.30.420.40">
    <property type="match status" value="1"/>
</dbReference>
<dbReference type="Gene3D" id="3.30.420.150">
    <property type="entry name" value="Exopolyphosphatase. Domain 2"/>
    <property type="match status" value="1"/>
</dbReference>
<dbReference type="Gene3D" id="1.10.3210.10">
    <property type="entry name" value="Hypothetical protein af1432"/>
    <property type="match status" value="1"/>
</dbReference>
<dbReference type="HAMAP" id="MF_01550">
    <property type="entry name" value="GppA"/>
    <property type="match status" value="1"/>
</dbReference>
<dbReference type="InterPro" id="IPR043129">
    <property type="entry name" value="ATPase_NBD"/>
</dbReference>
<dbReference type="InterPro" id="IPR050273">
    <property type="entry name" value="GppA/Ppx_hydrolase"/>
</dbReference>
<dbReference type="InterPro" id="IPR023709">
    <property type="entry name" value="Guo-5TP_3DP_PyrP"/>
</dbReference>
<dbReference type="InterPro" id="IPR048950">
    <property type="entry name" value="Ppx_GppA_C"/>
</dbReference>
<dbReference type="InterPro" id="IPR003695">
    <property type="entry name" value="Ppx_GppA_N"/>
</dbReference>
<dbReference type="InterPro" id="IPR030673">
    <property type="entry name" value="PyroPPase_GppA_Ppx"/>
</dbReference>
<dbReference type="NCBIfam" id="NF008260">
    <property type="entry name" value="PRK11031.1"/>
    <property type="match status" value="1"/>
</dbReference>
<dbReference type="PANTHER" id="PTHR30005">
    <property type="entry name" value="EXOPOLYPHOSPHATASE"/>
    <property type="match status" value="1"/>
</dbReference>
<dbReference type="PANTHER" id="PTHR30005:SF0">
    <property type="entry name" value="RETROGRADE REGULATION PROTEIN 2"/>
    <property type="match status" value="1"/>
</dbReference>
<dbReference type="Pfam" id="PF02541">
    <property type="entry name" value="Ppx-GppA"/>
    <property type="match status" value="1"/>
</dbReference>
<dbReference type="Pfam" id="PF21447">
    <property type="entry name" value="Ppx-GppA_III"/>
    <property type="match status" value="1"/>
</dbReference>
<dbReference type="PIRSF" id="PIRSF001267">
    <property type="entry name" value="Pyrophosphatase_GppA_Ppx"/>
    <property type="match status" value="1"/>
</dbReference>
<dbReference type="SUPFAM" id="SSF53067">
    <property type="entry name" value="Actin-like ATPase domain"/>
    <property type="match status" value="2"/>
</dbReference>
<dbReference type="SUPFAM" id="SSF109604">
    <property type="entry name" value="HD-domain/PDEase-like"/>
    <property type="match status" value="1"/>
</dbReference>
<accession>B7M5C6</accession>
<gene>
    <name evidence="1" type="primary">gppA</name>
    <name type="ordered locus">ECIAI1_3965</name>
</gene>
<comment type="function">
    <text evidence="1">Catalyzes the conversion of pppGpp to ppGpp. Guanosine pentaphosphate (pppGpp) is a cytoplasmic signaling molecule which together with ppGpp controls the 'stringent response', an adaptive process that allows bacteria to respond to amino acid starvation, resulting in the coordinated regulation of numerous cellular activities.</text>
</comment>
<comment type="catalytic activity">
    <reaction evidence="1">
        <text>guanosine 3'-diphosphate 5'-triphosphate + H2O = guanosine 3',5'-bis(diphosphate) + phosphate + H(+)</text>
        <dbReference type="Rhea" id="RHEA:13073"/>
        <dbReference type="ChEBI" id="CHEBI:15377"/>
        <dbReference type="ChEBI" id="CHEBI:15378"/>
        <dbReference type="ChEBI" id="CHEBI:43474"/>
        <dbReference type="ChEBI" id="CHEBI:77828"/>
        <dbReference type="ChEBI" id="CHEBI:142410"/>
        <dbReference type="EC" id="3.6.1.40"/>
    </reaction>
</comment>
<comment type="pathway">
    <text evidence="1">Purine metabolism; ppGpp biosynthesis; ppGpp from GTP: step 2/2.</text>
</comment>
<comment type="similarity">
    <text evidence="1">Belongs to the GppA/Ppx family. GppA subfamily.</text>
</comment>
<organism>
    <name type="scientific">Escherichia coli O8 (strain IAI1)</name>
    <dbReference type="NCBI Taxonomy" id="585034"/>
    <lineage>
        <taxon>Bacteria</taxon>
        <taxon>Pseudomonadati</taxon>
        <taxon>Pseudomonadota</taxon>
        <taxon>Gammaproteobacteria</taxon>
        <taxon>Enterobacterales</taxon>
        <taxon>Enterobacteriaceae</taxon>
        <taxon>Escherichia</taxon>
    </lineage>
</organism>
<keyword id="KW-0378">Hydrolase</keyword>
<protein>
    <recommendedName>
        <fullName evidence="1">Guanosine-5'-triphosphate,3'-diphosphate pyrophosphatase</fullName>
        <ecNumber evidence="1">3.6.1.40</ecNumber>
    </recommendedName>
    <alternativeName>
        <fullName evidence="1">Guanosine pentaphosphate phosphohydrolase</fullName>
    </alternativeName>
    <alternativeName>
        <fullName evidence="1">pppGpp-5'-phosphohydrolase</fullName>
    </alternativeName>
</protein>
<feature type="chain" id="PRO_1000146867" description="Guanosine-5'-triphosphate,3'-diphosphate pyrophosphatase">
    <location>
        <begin position="1"/>
        <end position="494"/>
    </location>
</feature>